<sequence>MFHRPVLQVFRQFARCQSTDSLSAILERSMNKVQLLGRVGQDPVMRQADGKNPVTIFSLATNELWRSGENEVFQPAGDVNQKTTWHRVSVFRPGLRDVAYQHVKKGARLLVEGKIDYGEYTDKNNVRRQATTIIADNIIFLTDLRDKP</sequence>
<dbReference type="EMBL" id="X83674">
    <property type="protein sequence ID" value="CAA58648.1"/>
    <property type="molecule type" value="Genomic_DNA"/>
</dbReference>
<dbReference type="EMBL" id="BC133265">
    <property type="protein sequence ID" value="AAI33266.1"/>
    <property type="molecule type" value="mRNA"/>
</dbReference>
<dbReference type="PIR" id="JC6172">
    <property type="entry name" value="JC6172"/>
</dbReference>
<dbReference type="RefSeq" id="NP_001091326.1">
    <property type="nucleotide sequence ID" value="NM_001097857.1"/>
</dbReference>
<dbReference type="SMR" id="P09381"/>
<dbReference type="DNASU" id="100037159"/>
<dbReference type="GeneID" id="100037159"/>
<dbReference type="KEGG" id="xla:100037159"/>
<dbReference type="AGR" id="Xenbase:XB-GENE-979715"/>
<dbReference type="CTD" id="100037159"/>
<dbReference type="Xenbase" id="XB-GENE-979715">
    <property type="gene designation" value="ssbp1.S"/>
</dbReference>
<dbReference type="OrthoDB" id="1078367at2759"/>
<dbReference type="Proteomes" id="UP000186698">
    <property type="component" value="Chromosome 3S"/>
</dbReference>
<dbReference type="Bgee" id="100037159">
    <property type="expression patterns" value="Expressed in oocyte and 19 other cell types or tissues"/>
</dbReference>
<dbReference type="GO" id="GO:0042645">
    <property type="term" value="C:mitochondrial nucleoid"/>
    <property type="evidence" value="ECO:0000250"/>
    <property type="project" value="UniProtKB"/>
</dbReference>
<dbReference type="GO" id="GO:0005739">
    <property type="term" value="C:mitochondrion"/>
    <property type="evidence" value="ECO:0000250"/>
    <property type="project" value="UniProtKB"/>
</dbReference>
<dbReference type="GO" id="GO:0003682">
    <property type="term" value="F:chromatin binding"/>
    <property type="evidence" value="ECO:0000250"/>
    <property type="project" value="UniProtKB"/>
</dbReference>
<dbReference type="GO" id="GO:0008047">
    <property type="term" value="F:enzyme activator activity"/>
    <property type="evidence" value="ECO:0000318"/>
    <property type="project" value="GO_Central"/>
</dbReference>
<dbReference type="GO" id="GO:0003697">
    <property type="term" value="F:single-stranded DNA binding"/>
    <property type="evidence" value="ECO:0000250"/>
    <property type="project" value="UniProtKB"/>
</dbReference>
<dbReference type="GO" id="GO:0006260">
    <property type="term" value="P:DNA replication"/>
    <property type="evidence" value="ECO:0000318"/>
    <property type="project" value="GO_Central"/>
</dbReference>
<dbReference type="GO" id="GO:0006264">
    <property type="term" value="P:mitochondrial DNA replication"/>
    <property type="evidence" value="ECO:0007669"/>
    <property type="project" value="TreeGrafter"/>
</dbReference>
<dbReference type="GO" id="GO:0000002">
    <property type="term" value="P:mitochondrial genome maintenance"/>
    <property type="evidence" value="ECO:0000318"/>
    <property type="project" value="GO_Central"/>
</dbReference>
<dbReference type="GO" id="GO:0090297">
    <property type="term" value="P:positive regulation of mitochondrial DNA replication"/>
    <property type="evidence" value="ECO:0000250"/>
    <property type="project" value="UniProtKB"/>
</dbReference>
<dbReference type="GO" id="GO:0051289">
    <property type="term" value="P:protein homotetramerization"/>
    <property type="evidence" value="ECO:0000250"/>
    <property type="project" value="UniProtKB"/>
</dbReference>
<dbReference type="CDD" id="cd04496">
    <property type="entry name" value="SSB_OBF"/>
    <property type="match status" value="1"/>
</dbReference>
<dbReference type="FunFam" id="2.40.50.140:FF:000129">
    <property type="entry name" value="Single-stranded DNA-binding protein 1, mitochondrial"/>
    <property type="match status" value="1"/>
</dbReference>
<dbReference type="Gene3D" id="2.40.50.140">
    <property type="entry name" value="Nucleic acid-binding proteins"/>
    <property type="match status" value="1"/>
</dbReference>
<dbReference type="HAMAP" id="MF_00984">
    <property type="entry name" value="SSB"/>
    <property type="match status" value="1"/>
</dbReference>
<dbReference type="InterPro" id="IPR012340">
    <property type="entry name" value="NA-bd_OB-fold"/>
</dbReference>
<dbReference type="InterPro" id="IPR000424">
    <property type="entry name" value="Primosome_PriB/ssb"/>
</dbReference>
<dbReference type="InterPro" id="IPR011344">
    <property type="entry name" value="ssDNA-bd"/>
</dbReference>
<dbReference type="NCBIfam" id="TIGR00621">
    <property type="entry name" value="ssb"/>
    <property type="match status" value="1"/>
</dbReference>
<dbReference type="PANTHER" id="PTHR10302">
    <property type="entry name" value="SINGLE-STRANDED DNA-BINDING PROTEIN"/>
    <property type="match status" value="1"/>
</dbReference>
<dbReference type="PANTHER" id="PTHR10302:SF0">
    <property type="entry name" value="SINGLE-STRANDED DNA-BINDING PROTEIN, MITOCHONDRIAL"/>
    <property type="match status" value="1"/>
</dbReference>
<dbReference type="Pfam" id="PF00436">
    <property type="entry name" value="SSB"/>
    <property type="match status" value="1"/>
</dbReference>
<dbReference type="PIRSF" id="PIRSF002070">
    <property type="entry name" value="SSB"/>
    <property type="match status" value="1"/>
</dbReference>
<dbReference type="SUPFAM" id="SSF50249">
    <property type="entry name" value="Nucleic acid-binding proteins"/>
    <property type="match status" value="1"/>
</dbReference>
<dbReference type="PROSITE" id="PS50935">
    <property type="entry name" value="SSB"/>
    <property type="match status" value="1"/>
</dbReference>
<evidence type="ECO:0000250" key="1">
    <source>
        <dbReference type="UniProtKB" id="Q04837"/>
    </source>
</evidence>
<evidence type="ECO:0000269" key="2">
    <source>
    </source>
</evidence>
<evidence type="ECO:0000305" key="3"/>
<proteinExistence type="evidence at protein level"/>
<accession>P09381</accession>
<accession>A2RVB2</accession>
<accession>O13264</accession>
<reference key="1">
    <citation type="journal article" date="1997" name="Gene">
        <title>Cloning, sequencing and expression of the two genes encoding the mitochondrial single-stranded DNA-binding protein in Xenopus laevis.</title>
        <authorList>
            <person name="Champagne A.M."/>
            <person name="Dufresne C."/>
            <person name="Viney L."/>
            <person name="Gueride M."/>
        </authorList>
    </citation>
    <scope>NUCLEOTIDE SEQUENCE [GENOMIC DNA]</scope>
</reference>
<reference key="2">
    <citation type="submission" date="2007-02" db="EMBL/GenBank/DDBJ databases">
        <authorList>
            <consortium name="NIH - Xenopus Gene Collection (XGC) project"/>
        </authorList>
    </citation>
    <scope>NUCLEOTIDE SEQUENCE [LARGE SCALE MRNA]</scope>
    <source>
        <tissue>Testis</tissue>
    </source>
</reference>
<reference key="3">
    <citation type="journal article" date="1991" name="Arch. Biochem. Biophys.">
        <title>Primary structure of the two variants of Xenopus laevis mtSSB, a mitochondrial DNA binding protein.</title>
        <authorList>
            <person name="Ghrir R."/>
            <person name="Lecaer J.-P."/>
            <person name="Dufresne C."/>
            <person name="Barat-Gueride M."/>
        </authorList>
    </citation>
    <scope>PROTEIN SEQUENCE OF 18-99</scope>
</reference>
<reference key="4">
    <citation type="journal article" date="1988" name="FEBS Lett.">
        <title>The amino-terminal sequence of the Xenopus laevis mitochondrial SSB is homologous to that of the Escherichia coli protein.</title>
        <authorList>
            <person name="Mahoungou C."/>
            <person name="Ghrir R."/>
            <person name="Lecaer J.-P."/>
            <person name="Mignotte B."/>
            <person name="Barat-Gueride M."/>
        </authorList>
    </citation>
    <scope>PRELIMINARY PROTEIN SEQUENCE OF 18-38</scope>
</reference>
<comment type="function">
    <text evidence="1">Binds preferentially and cooperatively to pyrimidine rich single-stranded DNA (ss-DNA). Required to maintain the copy number of mitochondrial DNA (mtDNA) and plays crucial roles during mtDNA replication that stimulate activity of the DNA polymerase at the replication fork. May also function in mtDNA repair.</text>
</comment>
<comment type="subunit">
    <text evidence="3">Homotetramer.</text>
</comment>
<comment type="subcellular location">
    <subcellularLocation>
        <location evidence="1">Mitochondrion</location>
    </subcellularLocation>
    <subcellularLocation>
        <location evidence="1">Mitochondrion matrix</location>
        <location evidence="1">Mitochondrion nucleoid</location>
    </subcellularLocation>
</comment>
<protein>
    <recommendedName>
        <fullName>Single-stranded DNA-binding protein 1-B, mitochondrial</fullName>
    </recommendedName>
    <alternativeName>
        <fullName>Single-stranded DNA-binding protein 2, mitochondrial</fullName>
        <shortName>MtSSB-2</shortName>
        <shortName>XlSSB2</shortName>
    </alternativeName>
    <alternativeName>
        <fullName>Single-stranded DNA-binding protein R, mitochondrial</fullName>
        <shortName>MtSSBr</shortName>
    </alternativeName>
</protein>
<feature type="transit peptide" description="Mitochondrion" evidence="2">
    <location>
        <begin position="1"/>
        <end position="17"/>
    </location>
</feature>
<feature type="chain" id="PRO_0000033267" description="Single-stranded DNA-binding protein 1-B, mitochondrial">
    <location>
        <begin position="18"/>
        <end position="148"/>
    </location>
</feature>
<feature type="domain" description="SSB">
    <location>
        <begin position="30"/>
        <end position="142"/>
    </location>
</feature>
<feature type="sequence conflict" description="In Ref. 3; AA sequence." evidence="3" ref="3">
    <original>D</original>
    <variation>E</variation>
    <location>
        <position position="49"/>
    </location>
</feature>
<feature type="sequence conflict" description="In Ref. 1; CAA58648." evidence="3" ref="1">
    <original>T</original>
    <variation>S</variation>
    <location>
        <position position="142"/>
    </location>
</feature>
<organism>
    <name type="scientific">Xenopus laevis</name>
    <name type="common">African clawed frog</name>
    <dbReference type="NCBI Taxonomy" id="8355"/>
    <lineage>
        <taxon>Eukaryota</taxon>
        <taxon>Metazoa</taxon>
        <taxon>Chordata</taxon>
        <taxon>Craniata</taxon>
        <taxon>Vertebrata</taxon>
        <taxon>Euteleostomi</taxon>
        <taxon>Amphibia</taxon>
        <taxon>Batrachia</taxon>
        <taxon>Anura</taxon>
        <taxon>Pipoidea</taxon>
        <taxon>Pipidae</taxon>
        <taxon>Xenopodinae</taxon>
        <taxon>Xenopus</taxon>
        <taxon>Xenopus</taxon>
    </lineage>
</organism>
<name>SSBPB_XENLA</name>
<gene>
    <name type="primary">ssbp1-b</name>
    <name type="synonym">mtssb2</name>
</gene>
<keyword id="KW-0903">Direct protein sequencing</keyword>
<keyword id="KW-0235">DNA replication</keyword>
<keyword id="KW-0238">DNA-binding</keyword>
<keyword id="KW-0496">Mitochondrion</keyword>
<keyword id="KW-1135">Mitochondrion nucleoid</keyword>
<keyword id="KW-1185">Reference proteome</keyword>
<keyword id="KW-0809">Transit peptide</keyword>